<evidence type="ECO:0000255" key="1">
    <source>
        <dbReference type="HAMAP-Rule" id="MF_00255"/>
    </source>
</evidence>
<accession>A5F487</accession>
<accession>C3M308</accession>
<protein>
    <recommendedName>
        <fullName evidence="1">Glycine--tRNA ligase beta subunit</fullName>
        <ecNumber evidence="1">6.1.1.14</ecNumber>
    </recommendedName>
    <alternativeName>
        <fullName evidence="1">Glycyl-tRNA synthetase beta subunit</fullName>
        <shortName evidence="1">GlyRS</shortName>
    </alternativeName>
</protein>
<organism>
    <name type="scientific">Vibrio cholerae serotype O1 (strain ATCC 39541 / Classical Ogawa 395 / O395)</name>
    <dbReference type="NCBI Taxonomy" id="345073"/>
    <lineage>
        <taxon>Bacteria</taxon>
        <taxon>Pseudomonadati</taxon>
        <taxon>Pseudomonadota</taxon>
        <taxon>Gammaproteobacteria</taxon>
        <taxon>Vibrionales</taxon>
        <taxon>Vibrionaceae</taxon>
        <taxon>Vibrio</taxon>
    </lineage>
</organism>
<dbReference type="EC" id="6.1.1.14" evidence="1"/>
<dbReference type="EMBL" id="CP000627">
    <property type="protein sequence ID" value="ABQ21154.1"/>
    <property type="molecule type" value="Genomic_DNA"/>
</dbReference>
<dbReference type="EMBL" id="CP001235">
    <property type="protein sequence ID" value="ACP08187.1"/>
    <property type="molecule type" value="Genomic_DNA"/>
</dbReference>
<dbReference type="RefSeq" id="WP_001040221.1">
    <property type="nucleotide sequence ID" value="NZ_JAACZH010000018.1"/>
</dbReference>
<dbReference type="SMR" id="A5F487"/>
<dbReference type="KEGG" id="vco:VC0395_A2499"/>
<dbReference type="KEGG" id="vcr:VC395_0160"/>
<dbReference type="PATRIC" id="fig|345073.21.peg.151"/>
<dbReference type="eggNOG" id="COG0751">
    <property type="taxonomic scope" value="Bacteria"/>
</dbReference>
<dbReference type="HOGENOM" id="CLU_007220_2_2_6"/>
<dbReference type="OrthoDB" id="9775440at2"/>
<dbReference type="Proteomes" id="UP000000249">
    <property type="component" value="Chromosome 2"/>
</dbReference>
<dbReference type="GO" id="GO:0005829">
    <property type="term" value="C:cytosol"/>
    <property type="evidence" value="ECO:0007669"/>
    <property type="project" value="TreeGrafter"/>
</dbReference>
<dbReference type="GO" id="GO:0004814">
    <property type="term" value="F:arginine-tRNA ligase activity"/>
    <property type="evidence" value="ECO:0007669"/>
    <property type="project" value="InterPro"/>
</dbReference>
<dbReference type="GO" id="GO:0005524">
    <property type="term" value="F:ATP binding"/>
    <property type="evidence" value="ECO:0007669"/>
    <property type="project" value="UniProtKB-UniRule"/>
</dbReference>
<dbReference type="GO" id="GO:0004820">
    <property type="term" value="F:glycine-tRNA ligase activity"/>
    <property type="evidence" value="ECO:0007669"/>
    <property type="project" value="UniProtKB-UniRule"/>
</dbReference>
<dbReference type="GO" id="GO:0006420">
    <property type="term" value="P:arginyl-tRNA aminoacylation"/>
    <property type="evidence" value="ECO:0007669"/>
    <property type="project" value="InterPro"/>
</dbReference>
<dbReference type="GO" id="GO:0006426">
    <property type="term" value="P:glycyl-tRNA aminoacylation"/>
    <property type="evidence" value="ECO:0007669"/>
    <property type="project" value="UniProtKB-UniRule"/>
</dbReference>
<dbReference type="HAMAP" id="MF_00255">
    <property type="entry name" value="Gly_tRNA_synth_beta"/>
    <property type="match status" value="1"/>
</dbReference>
<dbReference type="InterPro" id="IPR008909">
    <property type="entry name" value="DALR_anticod-bd"/>
</dbReference>
<dbReference type="InterPro" id="IPR015944">
    <property type="entry name" value="Gly-tRNA-synth_bsu"/>
</dbReference>
<dbReference type="InterPro" id="IPR006194">
    <property type="entry name" value="Gly-tRNA-synth_heterodimer"/>
</dbReference>
<dbReference type="NCBIfam" id="TIGR00211">
    <property type="entry name" value="glyS"/>
    <property type="match status" value="1"/>
</dbReference>
<dbReference type="PANTHER" id="PTHR30075:SF2">
    <property type="entry name" value="GLYCINE--TRNA LIGASE, CHLOROPLASTIC_MITOCHONDRIAL 2"/>
    <property type="match status" value="1"/>
</dbReference>
<dbReference type="PANTHER" id="PTHR30075">
    <property type="entry name" value="GLYCYL-TRNA SYNTHETASE"/>
    <property type="match status" value="1"/>
</dbReference>
<dbReference type="Pfam" id="PF05746">
    <property type="entry name" value="DALR_1"/>
    <property type="match status" value="1"/>
</dbReference>
<dbReference type="Pfam" id="PF02092">
    <property type="entry name" value="tRNA_synt_2f"/>
    <property type="match status" value="1"/>
</dbReference>
<dbReference type="PRINTS" id="PR01045">
    <property type="entry name" value="TRNASYNTHGB"/>
</dbReference>
<dbReference type="SUPFAM" id="SSF109604">
    <property type="entry name" value="HD-domain/PDEase-like"/>
    <property type="match status" value="1"/>
</dbReference>
<dbReference type="PROSITE" id="PS50861">
    <property type="entry name" value="AA_TRNA_LIGASE_II_GLYAB"/>
    <property type="match status" value="1"/>
</dbReference>
<sequence>MAKEFLIELGTEELPPKQLRTLAEAFAANFAAELATADIAHEGVTWFATPRRLALKVANLAESQPDRVVEKRGPAVNVAFDADGKPTKAAEGWARGNGITVEQAERLVTDKGEWLLFKEQVQGQQTASVVVEMAAKALANLPIAKPMRWGDKETQFIRPVKTLTILFGSELIQGEILGVASARTLRGHRFMGEAEFTIESAEQYPAILEERGKVIADYATRKAMIIEGSQQAAQQLGGIADLEDALVEEVTSLVEWPVVMTAKFEEKFLKVPAEALVYTMKGDQKYFPVYDASKKLLPNFIFVSNIESKEPRHIVEGNEKVVRPRLADAEFFFNTDRKRPLVDRLPLLENAIFQQQLGTIKDKTDRITELAGYIAEQIGADVEKSKRAGLLAKCDLMTSMVFEFTDTQGVMGMHYARHDGEAEEVAVALNEQYMPRFAGDELPSRGVSAAVAMADKLDTIVGIFGIGQAPKGSDPFALRRASLGVLRILVEYGYQLDLVDLIAKAKSLFGDRLTNANVEQEVIEFMLGRFPTWYQDAGFSIDIIQAVLARNPTKPADFDQRVKAVSHFRALEEAEALAAANKRVGNILAKYDGELGEEIDLALLQEDAEKALAEAVEIMAEALEPAFATGNYQEALSKLAGLRAPVDAFFDNVMVMADDEALKKNRLTLLNKLRNLFLQIADISLLQK</sequence>
<keyword id="KW-0030">Aminoacyl-tRNA synthetase</keyword>
<keyword id="KW-0067">ATP-binding</keyword>
<keyword id="KW-0963">Cytoplasm</keyword>
<keyword id="KW-0436">Ligase</keyword>
<keyword id="KW-0547">Nucleotide-binding</keyword>
<keyword id="KW-0648">Protein biosynthesis</keyword>
<reference key="1">
    <citation type="submission" date="2007-03" db="EMBL/GenBank/DDBJ databases">
        <authorList>
            <person name="Heidelberg J."/>
        </authorList>
    </citation>
    <scope>NUCLEOTIDE SEQUENCE [LARGE SCALE GENOMIC DNA]</scope>
    <source>
        <strain>ATCC 39541 / Classical Ogawa 395 / O395</strain>
    </source>
</reference>
<reference key="2">
    <citation type="journal article" date="2008" name="PLoS ONE">
        <title>A recalibrated molecular clock and independent origins for the cholera pandemic clones.</title>
        <authorList>
            <person name="Feng L."/>
            <person name="Reeves P.R."/>
            <person name="Lan R."/>
            <person name="Ren Y."/>
            <person name="Gao C."/>
            <person name="Zhou Z."/>
            <person name="Ren Y."/>
            <person name="Cheng J."/>
            <person name="Wang W."/>
            <person name="Wang J."/>
            <person name="Qian W."/>
            <person name="Li D."/>
            <person name="Wang L."/>
        </authorList>
    </citation>
    <scope>NUCLEOTIDE SEQUENCE [LARGE SCALE GENOMIC DNA]</scope>
    <source>
        <strain>ATCC 39541 / Classical Ogawa 395 / O395</strain>
    </source>
</reference>
<proteinExistence type="inferred from homology"/>
<feature type="chain" id="PRO_1000071880" description="Glycine--tRNA ligase beta subunit">
    <location>
        <begin position="1"/>
        <end position="688"/>
    </location>
</feature>
<gene>
    <name evidence="1" type="primary">glyS</name>
    <name type="ordered locus">VC0395_A2499</name>
    <name type="ordered locus">VC395_0160</name>
</gene>
<comment type="catalytic activity">
    <reaction evidence="1">
        <text>tRNA(Gly) + glycine + ATP = glycyl-tRNA(Gly) + AMP + diphosphate</text>
        <dbReference type="Rhea" id="RHEA:16013"/>
        <dbReference type="Rhea" id="RHEA-COMP:9664"/>
        <dbReference type="Rhea" id="RHEA-COMP:9683"/>
        <dbReference type="ChEBI" id="CHEBI:30616"/>
        <dbReference type="ChEBI" id="CHEBI:33019"/>
        <dbReference type="ChEBI" id="CHEBI:57305"/>
        <dbReference type="ChEBI" id="CHEBI:78442"/>
        <dbReference type="ChEBI" id="CHEBI:78522"/>
        <dbReference type="ChEBI" id="CHEBI:456215"/>
        <dbReference type="EC" id="6.1.1.14"/>
    </reaction>
</comment>
<comment type="subunit">
    <text evidence="1">Tetramer of two alpha and two beta subunits.</text>
</comment>
<comment type="subcellular location">
    <subcellularLocation>
        <location evidence="1">Cytoplasm</location>
    </subcellularLocation>
</comment>
<comment type="similarity">
    <text evidence="1">Belongs to the class-II aminoacyl-tRNA synthetase family.</text>
</comment>
<name>SYGB_VIBC3</name>